<protein>
    <recommendedName>
        <fullName>WAP four-disulfide core domain protein 5</fullName>
    </recommendedName>
</protein>
<proteinExistence type="inferred from homology"/>
<organism>
    <name type="scientific">Pan troglodytes</name>
    <name type="common">Chimpanzee</name>
    <dbReference type="NCBI Taxonomy" id="9598"/>
    <lineage>
        <taxon>Eukaryota</taxon>
        <taxon>Metazoa</taxon>
        <taxon>Chordata</taxon>
        <taxon>Craniata</taxon>
        <taxon>Vertebrata</taxon>
        <taxon>Euteleostomi</taxon>
        <taxon>Mammalia</taxon>
        <taxon>Eutheria</taxon>
        <taxon>Euarchontoglires</taxon>
        <taxon>Primates</taxon>
        <taxon>Haplorrhini</taxon>
        <taxon>Catarrhini</taxon>
        <taxon>Hominidae</taxon>
        <taxon>Pan</taxon>
    </lineage>
</organism>
<comment type="function">
    <text evidence="1">Putative acid-stable proteinase inhibitor.</text>
</comment>
<comment type="subcellular location">
    <subcellularLocation>
        <location evidence="4">Secreted</location>
    </subcellularLocation>
</comment>
<accession>A4K2N9</accession>
<name>WFDC5_PANTR</name>
<dbReference type="EMBL" id="DP000037">
    <property type="protein sequence ID" value="ABO52924.1"/>
    <property type="molecule type" value="Genomic_DNA"/>
</dbReference>
<dbReference type="RefSeq" id="NP_001129326.1">
    <property type="nucleotide sequence ID" value="NM_001135854.1"/>
</dbReference>
<dbReference type="SMR" id="A4K2N9"/>
<dbReference type="STRING" id="9598.ENSPTRP00000052112"/>
<dbReference type="PaxDb" id="9598-ENSPTRP00000052112"/>
<dbReference type="GeneID" id="740370"/>
<dbReference type="KEGG" id="ptr:740370"/>
<dbReference type="CTD" id="149708"/>
<dbReference type="eggNOG" id="ENOG502S99V">
    <property type="taxonomic scope" value="Eukaryota"/>
</dbReference>
<dbReference type="HOGENOM" id="CLU_105901_2_0_1"/>
<dbReference type="InParanoid" id="A4K2N9"/>
<dbReference type="OrthoDB" id="3222at9604"/>
<dbReference type="TreeFam" id="TF338375"/>
<dbReference type="Proteomes" id="UP000002277">
    <property type="component" value="Unplaced"/>
</dbReference>
<dbReference type="GO" id="GO:0005615">
    <property type="term" value="C:extracellular space"/>
    <property type="evidence" value="ECO:0000318"/>
    <property type="project" value="GO_Central"/>
</dbReference>
<dbReference type="GO" id="GO:0004867">
    <property type="term" value="F:serine-type endopeptidase inhibitor activity"/>
    <property type="evidence" value="ECO:0000318"/>
    <property type="project" value="GO_Central"/>
</dbReference>
<dbReference type="GO" id="GO:0019731">
    <property type="term" value="P:antibacterial humoral response"/>
    <property type="evidence" value="ECO:0000318"/>
    <property type="project" value="GO_Central"/>
</dbReference>
<dbReference type="GO" id="GO:0045087">
    <property type="term" value="P:innate immune response"/>
    <property type="evidence" value="ECO:0000318"/>
    <property type="project" value="GO_Central"/>
</dbReference>
<dbReference type="Gene3D" id="4.10.75.10">
    <property type="entry name" value="Elafin-like"/>
    <property type="match status" value="2"/>
</dbReference>
<dbReference type="InterPro" id="IPR036645">
    <property type="entry name" value="Elafin-like_sf"/>
</dbReference>
<dbReference type="InterPro" id="IPR008197">
    <property type="entry name" value="WAP_dom"/>
</dbReference>
<dbReference type="InterPro" id="IPR050514">
    <property type="entry name" value="WAP_four-disulfide_core"/>
</dbReference>
<dbReference type="PANTHER" id="PTHR19441:SF39">
    <property type="entry name" value="WAP FOUR-DISULFIDE CORE DOMAIN PROTEIN 5"/>
    <property type="match status" value="1"/>
</dbReference>
<dbReference type="PANTHER" id="PTHR19441">
    <property type="entry name" value="WHEY ACDIC PROTEIN WAP"/>
    <property type="match status" value="1"/>
</dbReference>
<dbReference type="Pfam" id="PF00095">
    <property type="entry name" value="WAP"/>
    <property type="match status" value="2"/>
</dbReference>
<dbReference type="PRINTS" id="PR00003">
    <property type="entry name" value="4DISULPHCORE"/>
</dbReference>
<dbReference type="SMART" id="SM00217">
    <property type="entry name" value="WAP"/>
    <property type="match status" value="2"/>
</dbReference>
<dbReference type="SUPFAM" id="SSF57256">
    <property type="entry name" value="Elafin-like"/>
    <property type="match status" value="2"/>
</dbReference>
<dbReference type="PROSITE" id="PS51390">
    <property type="entry name" value="WAP"/>
    <property type="match status" value="2"/>
</dbReference>
<gene>
    <name type="primary">WFDC5</name>
</gene>
<feature type="signal peptide" evidence="2">
    <location>
        <begin position="1"/>
        <end position="24"/>
    </location>
</feature>
<feature type="chain" id="PRO_0000289641" description="WAP four-disulfide core domain protein 5">
    <location>
        <begin position="25"/>
        <end position="123"/>
    </location>
</feature>
<feature type="domain" description="WAP 1" evidence="3">
    <location>
        <begin position="27"/>
        <end position="73"/>
    </location>
</feature>
<feature type="domain" description="WAP 2" evidence="3">
    <location>
        <begin position="74"/>
        <end position="121"/>
    </location>
</feature>
<feature type="disulfide bond" evidence="3">
    <location>
        <begin position="34"/>
        <end position="62"/>
    </location>
</feature>
<feature type="disulfide bond" evidence="3">
    <location>
        <begin position="41"/>
        <end position="66"/>
    </location>
</feature>
<feature type="disulfide bond" evidence="3">
    <location>
        <begin position="49"/>
        <end position="61"/>
    </location>
</feature>
<feature type="disulfide bond" evidence="3">
    <location>
        <begin position="55"/>
        <end position="70"/>
    </location>
</feature>
<feature type="disulfide bond" evidence="3">
    <location>
        <begin position="81"/>
        <end position="109"/>
    </location>
</feature>
<feature type="disulfide bond" evidence="3">
    <location>
        <begin position="88"/>
        <end position="113"/>
    </location>
</feature>
<feature type="disulfide bond" evidence="3">
    <location>
        <begin position="96"/>
        <end position="108"/>
    </location>
</feature>
<feature type="disulfide bond" evidence="3">
    <location>
        <begin position="102"/>
        <end position="117"/>
    </location>
</feature>
<reference key="1">
    <citation type="journal article" date="2007" name="Genome Res.">
        <title>Comparative sequence analyses reveal rapid and divergent evolutionary changes of the WFDC locus in the primate lineage.</title>
        <authorList>
            <consortium name="NISC comparative sequencing program"/>
            <person name="Hurle B."/>
            <person name="Swanson W."/>
            <person name="Green E.D."/>
        </authorList>
    </citation>
    <scope>NUCLEOTIDE SEQUENCE [GENOMIC DNA]</scope>
</reference>
<evidence type="ECO:0000250" key="1"/>
<evidence type="ECO:0000255" key="2"/>
<evidence type="ECO:0000255" key="3">
    <source>
        <dbReference type="PROSITE-ProRule" id="PRU00722"/>
    </source>
</evidence>
<evidence type="ECO:0000305" key="4"/>
<sequence length="123" mass="13313">MRTQSLLLLGALLAVGSQLPAVFGRKKGEKSGGCPPDDGPCLLSVPDQCVEDSQCPLTRKCCYRACFRQCVPRVSVKLGSCPEDQLRCLSPMNHLCHKDSDCSGKKRCCHSACGRDCRDPARG</sequence>
<keyword id="KW-1015">Disulfide bond</keyword>
<keyword id="KW-0646">Protease inhibitor</keyword>
<keyword id="KW-1185">Reference proteome</keyword>
<keyword id="KW-0677">Repeat</keyword>
<keyword id="KW-0964">Secreted</keyword>
<keyword id="KW-0722">Serine protease inhibitor</keyword>
<keyword id="KW-0732">Signal</keyword>